<keyword id="KW-0067">ATP-binding</keyword>
<keyword id="KW-0963">Cytoplasm</keyword>
<keyword id="KW-0275">Fatty acid biosynthesis</keyword>
<keyword id="KW-0276">Fatty acid metabolism</keyword>
<keyword id="KW-0444">Lipid biosynthesis</keyword>
<keyword id="KW-0443">Lipid metabolism</keyword>
<keyword id="KW-0547">Nucleotide-binding</keyword>
<keyword id="KW-0808">Transferase</keyword>
<dbReference type="EC" id="2.1.3.15" evidence="1"/>
<dbReference type="EMBL" id="CP000437">
    <property type="protein sequence ID" value="ABI82308.1"/>
    <property type="molecule type" value="Genomic_DNA"/>
</dbReference>
<dbReference type="RefSeq" id="WP_003018337.1">
    <property type="nucleotide sequence ID" value="NC_017463.1"/>
</dbReference>
<dbReference type="SMR" id="Q0BNM6"/>
<dbReference type="KEGG" id="fth:FTH_0295"/>
<dbReference type="UniPathway" id="UPA00655">
    <property type="reaction ID" value="UER00711"/>
</dbReference>
<dbReference type="GO" id="GO:0009317">
    <property type="term" value="C:acetyl-CoA carboxylase complex"/>
    <property type="evidence" value="ECO:0007669"/>
    <property type="project" value="InterPro"/>
</dbReference>
<dbReference type="GO" id="GO:0003989">
    <property type="term" value="F:acetyl-CoA carboxylase activity"/>
    <property type="evidence" value="ECO:0007669"/>
    <property type="project" value="InterPro"/>
</dbReference>
<dbReference type="GO" id="GO:0005524">
    <property type="term" value="F:ATP binding"/>
    <property type="evidence" value="ECO:0007669"/>
    <property type="project" value="UniProtKB-KW"/>
</dbReference>
<dbReference type="GO" id="GO:0016743">
    <property type="term" value="F:carboxyl- or carbamoyltransferase activity"/>
    <property type="evidence" value="ECO:0007669"/>
    <property type="project" value="UniProtKB-UniRule"/>
</dbReference>
<dbReference type="GO" id="GO:0006633">
    <property type="term" value="P:fatty acid biosynthetic process"/>
    <property type="evidence" value="ECO:0007669"/>
    <property type="project" value="UniProtKB-KW"/>
</dbReference>
<dbReference type="GO" id="GO:2001295">
    <property type="term" value="P:malonyl-CoA biosynthetic process"/>
    <property type="evidence" value="ECO:0007669"/>
    <property type="project" value="UniProtKB-UniRule"/>
</dbReference>
<dbReference type="Gene3D" id="3.90.226.10">
    <property type="entry name" value="2-enoyl-CoA Hydratase, Chain A, domain 1"/>
    <property type="match status" value="1"/>
</dbReference>
<dbReference type="HAMAP" id="MF_00823">
    <property type="entry name" value="AcetylCoA_CT_alpha"/>
    <property type="match status" value="1"/>
</dbReference>
<dbReference type="InterPro" id="IPR001095">
    <property type="entry name" value="Acetyl_CoA_COase_a_su"/>
</dbReference>
<dbReference type="InterPro" id="IPR029045">
    <property type="entry name" value="ClpP/crotonase-like_dom_sf"/>
</dbReference>
<dbReference type="InterPro" id="IPR011763">
    <property type="entry name" value="COA_CT_C"/>
</dbReference>
<dbReference type="NCBIfam" id="TIGR00513">
    <property type="entry name" value="accA"/>
    <property type="match status" value="1"/>
</dbReference>
<dbReference type="NCBIfam" id="NF041504">
    <property type="entry name" value="AccA_sub"/>
    <property type="match status" value="1"/>
</dbReference>
<dbReference type="NCBIfam" id="NF004344">
    <property type="entry name" value="PRK05724.1"/>
    <property type="match status" value="1"/>
</dbReference>
<dbReference type="PANTHER" id="PTHR42853">
    <property type="entry name" value="ACETYL-COENZYME A CARBOXYLASE CARBOXYL TRANSFERASE SUBUNIT ALPHA"/>
    <property type="match status" value="1"/>
</dbReference>
<dbReference type="PANTHER" id="PTHR42853:SF3">
    <property type="entry name" value="ACETYL-COENZYME A CARBOXYLASE CARBOXYL TRANSFERASE SUBUNIT ALPHA, CHLOROPLASTIC"/>
    <property type="match status" value="1"/>
</dbReference>
<dbReference type="Pfam" id="PF03255">
    <property type="entry name" value="ACCA"/>
    <property type="match status" value="1"/>
</dbReference>
<dbReference type="PRINTS" id="PR01069">
    <property type="entry name" value="ACCCTRFRASEA"/>
</dbReference>
<dbReference type="SUPFAM" id="SSF52096">
    <property type="entry name" value="ClpP/crotonase"/>
    <property type="match status" value="1"/>
</dbReference>
<dbReference type="PROSITE" id="PS50989">
    <property type="entry name" value="COA_CT_CTER"/>
    <property type="match status" value="1"/>
</dbReference>
<accession>Q0BNM6</accession>
<evidence type="ECO:0000255" key="1">
    <source>
        <dbReference type="HAMAP-Rule" id="MF_00823"/>
    </source>
</evidence>
<evidence type="ECO:0000255" key="2">
    <source>
        <dbReference type="PROSITE-ProRule" id="PRU01137"/>
    </source>
</evidence>
<name>ACCA_FRATO</name>
<protein>
    <recommendedName>
        <fullName evidence="1">Acetyl-coenzyme A carboxylase carboxyl transferase subunit alpha</fullName>
        <shortName evidence="1">ACCase subunit alpha</shortName>
        <shortName evidence="1">Acetyl-CoA carboxylase carboxyltransferase subunit alpha</shortName>
        <ecNumber evidence="1">2.1.3.15</ecNumber>
    </recommendedName>
</protein>
<gene>
    <name evidence="1" type="primary">accA</name>
    <name type="ordered locus">FTH_0295</name>
</gene>
<comment type="function">
    <text evidence="1">Component of the acetyl coenzyme A carboxylase (ACC) complex. First, biotin carboxylase catalyzes the carboxylation of biotin on its carrier protein (BCCP) and then the CO(2) group is transferred by the carboxyltransferase to acetyl-CoA to form malonyl-CoA.</text>
</comment>
<comment type="catalytic activity">
    <reaction evidence="1">
        <text>N(6)-carboxybiotinyl-L-lysyl-[protein] + acetyl-CoA = N(6)-biotinyl-L-lysyl-[protein] + malonyl-CoA</text>
        <dbReference type="Rhea" id="RHEA:54728"/>
        <dbReference type="Rhea" id="RHEA-COMP:10505"/>
        <dbReference type="Rhea" id="RHEA-COMP:10506"/>
        <dbReference type="ChEBI" id="CHEBI:57288"/>
        <dbReference type="ChEBI" id="CHEBI:57384"/>
        <dbReference type="ChEBI" id="CHEBI:83144"/>
        <dbReference type="ChEBI" id="CHEBI:83145"/>
        <dbReference type="EC" id="2.1.3.15"/>
    </reaction>
</comment>
<comment type="pathway">
    <text evidence="1">Lipid metabolism; malonyl-CoA biosynthesis; malonyl-CoA from acetyl-CoA: step 1/1.</text>
</comment>
<comment type="subunit">
    <text evidence="1">Acetyl-CoA carboxylase is a heterohexamer composed of biotin carboxyl carrier protein (AccB), biotin carboxylase (AccC) and two subunits each of ACCase subunit alpha (AccA) and ACCase subunit beta (AccD).</text>
</comment>
<comment type="subcellular location">
    <subcellularLocation>
        <location evidence="1">Cytoplasm</location>
    </subcellularLocation>
</comment>
<comment type="similarity">
    <text evidence="1">Belongs to the AccA family.</text>
</comment>
<reference key="1">
    <citation type="journal article" date="2006" name="J. Bacteriol.">
        <title>Chromosome rearrangement and diversification of Francisella tularensis revealed by the type B (OSU18) genome sequence.</title>
        <authorList>
            <person name="Petrosino J.F."/>
            <person name="Xiang Q."/>
            <person name="Karpathy S.E."/>
            <person name="Jiang H."/>
            <person name="Yerrapragada S."/>
            <person name="Liu Y."/>
            <person name="Gioia J."/>
            <person name="Hemphill L."/>
            <person name="Gonzalez A."/>
            <person name="Raghavan T.M."/>
            <person name="Uzman A."/>
            <person name="Fox G.E."/>
            <person name="Highlander S."/>
            <person name="Reichard M."/>
            <person name="Morton R.J."/>
            <person name="Clinkenbeard K.D."/>
            <person name="Weinstock G.M."/>
        </authorList>
    </citation>
    <scope>NUCLEOTIDE SEQUENCE [LARGE SCALE GENOMIC DNA]</scope>
    <source>
        <strain>OSU18</strain>
    </source>
</reference>
<organism>
    <name type="scientific">Francisella tularensis subsp. holarctica (strain OSU18)</name>
    <dbReference type="NCBI Taxonomy" id="393011"/>
    <lineage>
        <taxon>Bacteria</taxon>
        <taxon>Pseudomonadati</taxon>
        <taxon>Pseudomonadota</taxon>
        <taxon>Gammaproteobacteria</taxon>
        <taxon>Thiotrichales</taxon>
        <taxon>Francisellaceae</taxon>
        <taxon>Francisella</taxon>
    </lineage>
</organism>
<sequence>MNYLDFESKIKEIEDKITSLSHVFEDEKTEAEIKKLSKKRLELMESTYSKLTDWQVVQLSRHPDRPYFKDLLPLIFTDFQELHGDRTFGDDLAVIGGLAKLNNKPVMVIGQEKGRDTKSKIKHNFGMMHPEGYRKALRLMKLAEKFNMPVVTFIDTPGAYPGIKAEERGQSEAIARNLLEMSALKVPVVCIVIGEGCSGGALGIGVGDRLLMLQYSYFATISPEGCASILHKTAEKASEVTQMMNITSGRLKELKIVDEVIPEPLGGAHRDYETTATNIRKAVAAELKILSEMTVEQRNSRRYDKLMSFGRFKEA</sequence>
<proteinExistence type="inferred from homology"/>
<feature type="chain" id="PRO_1000062623" description="Acetyl-coenzyme A carboxylase carboxyl transferase subunit alpha">
    <location>
        <begin position="1"/>
        <end position="315"/>
    </location>
</feature>
<feature type="domain" description="CoA carboxyltransferase C-terminal" evidence="2">
    <location>
        <begin position="36"/>
        <end position="289"/>
    </location>
</feature>